<comment type="function">
    <text evidence="1">Formation of pseudouridine at positions 38, 39 and 40 in the anticodon stem and loop of transfer RNAs.</text>
</comment>
<comment type="catalytic activity">
    <reaction evidence="1">
        <text>uridine(38/39/40) in tRNA = pseudouridine(38/39/40) in tRNA</text>
        <dbReference type="Rhea" id="RHEA:22376"/>
        <dbReference type="Rhea" id="RHEA-COMP:10085"/>
        <dbReference type="Rhea" id="RHEA-COMP:10087"/>
        <dbReference type="ChEBI" id="CHEBI:65314"/>
        <dbReference type="ChEBI" id="CHEBI:65315"/>
        <dbReference type="EC" id="5.4.99.12"/>
    </reaction>
</comment>
<comment type="subunit">
    <text evidence="1">Homodimer.</text>
</comment>
<comment type="similarity">
    <text evidence="1">Belongs to the tRNA pseudouridine synthase TruA family.</text>
</comment>
<gene>
    <name evidence="1" type="primary">truA</name>
    <name type="ordered locus">MGAS2096_Spy1641</name>
</gene>
<feature type="chain" id="PRO_1000017192" description="tRNA pseudouridine synthase A">
    <location>
        <begin position="1"/>
        <end position="249"/>
    </location>
</feature>
<feature type="active site" description="Nucleophile" evidence="1">
    <location>
        <position position="53"/>
    </location>
</feature>
<feature type="binding site" evidence="1">
    <location>
        <position position="111"/>
    </location>
    <ligand>
        <name>substrate</name>
    </ligand>
</feature>
<sequence length="249" mass="28356">MVRYKATISYDGTLFSGFQRQRHLRTVQEEIEKTLYKLNNGTKIIIHGAGRTDAGVHAYGQVIHFDLPQEQEVEKLRFALDTQTPEDIDVVNIEKVADDFHCRYQKHLKTYEFLVDNGRPKNPMMRHYTTHYPYTLNIKLMQEAINGLVGTHDFTGFTAAGTSVQNKVRTITKATVSRDEKTDFLVFTFSGNGFLYKQVRNMVGTLLKIGNGQMPVEQVKVILSSKNRQLAGPTISGNGLYLKEICYEN</sequence>
<organism>
    <name type="scientific">Streptococcus pyogenes serotype M12 (strain MGAS2096)</name>
    <dbReference type="NCBI Taxonomy" id="370553"/>
    <lineage>
        <taxon>Bacteria</taxon>
        <taxon>Bacillati</taxon>
        <taxon>Bacillota</taxon>
        <taxon>Bacilli</taxon>
        <taxon>Lactobacillales</taxon>
        <taxon>Streptococcaceae</taxon>
        <taxon>Streptococcus</taxon>
    </lineage>
</organism>
<protein>
    <recommendedName>
        <fullName evidence="1">tRNA pseudouridine synthase A</fullName>
        <ecNumber evidence="1">5.4.99.12</ecNumber>
    </recommendedName>
    <alternativeName>
        <fullName evidence="1">tRNA pseudouridine(38-40) synthase</fullName>
    </alternativeName>
    <alternativeName>
        <fullName evidence="1">tRNA pseudouridylate synthase I</fullName>
    </alternativeName>
    <alternativeName>
        <fullName evidence="1">tRNA-uridine isomerase I</fullName>
    </alternativeName>
</protein>
<name>TRUA_STRPB</name>
<keyword id="KW-0413">Isomerase</keyword>
<keyword id="KW-0819">tRNA processing</keyword>
<evidence type="ECO:0000255" key="1">
    <source>
        <dbReference type="HAMAP-Rule" id="MF_00171"/>
    </source>
</evidence>
<dbReference type="EC" id="5.4.99.12" evidence="1"/>
<dbReference type="EMBL" id="CP000261">
    <property type="protein sequence ID" value="ABF36693.1"/>
    <property type="molecule type" value="Genomic_DNA"/>
</dbReference>
<dbReference type="SMR" id="Q1J9W8"/>
<dbReference type="KEGG" id="spj:MGAS2096_Spy1641"/>
<dbReference type="HOGENOM" id="CLU_014673_0_1_9"/>
<dbReference type="GO" id="GO:0003723">
    <property type="term" value="F:RNA binding"/>
    <property type="evidence" value="ECO:0007669"/>
    <property type="project" value="InterPro"/>
</dbReference>
<dbReference type="GO" id="GO:0160147">
    <property type="term" value="F:tRNA pseudouridine(38-40) synthase activity"/>
    <property type="evidence" value="ECO:0007669"/>
    <property type="project" value="UniProtKB-EC"/>
</dbReference>
<dbReference type="GO" id="GO:0031119">
    <property type="term" value="P:tRNA pseudouridine synthesis"/>
    <property type="evidence" value="ECO:0007669"/>
    <property type="project" value="UniProtKB-UniRule"/>
</dbReference>
<dbReference type="CDD" id="cd02570">
    <property type="entry name" value="PseudoU_synth_EcTruA"/>
    <property type="match status" value="1"/>
</dbReference>
<dbReference type="FunFam" id="3.30.70.580:FF:000001">
    <property type="entry name" value="tRNA pseudouridine synthase A"/>
    <property type="match status" value="1"/>
</dbReference>
<dbReference type="Gene3D" id="3.30.70.660">
    <property type="entry name" value="Pseudouridine synthase I, catalytic domain, C-terminal subdomain"/>
    <property type="match status" value="1"/>
</dbReference>
<dbReference type="Gene3D" id="3.30.70.580">
    <property type="entry name" value="Pseudouridine synthase I, catalytic domain, N-terminal subdomain"/>
    <property type="match status" value="1"/>
</dbReference>
<dbReference type="HAMAP" id="MF_00171">
    <property type="entry name" value="TruA"/>
    <property type="match status" value="1"/>
</dbReference>
<dbReference type="InterPro" id="IPR020103">
    <property type="entry name" value="PsdUridine_synth_cat_dom_sf"/>
</dbReference>
<dbReference type="InterPro" id="IPR001406">
    <property type="entry name" value="PsdUridine_synth_TruA"/>
</dbReference>
<dbReference type="InterPro" id="IPR020097">
    <property type="entry name" value="PsdUridine_synth_TruA_a/b_dom"/>
</dbReference>
<dbReference type="InterPro" id="IPR020095">
    <property type="entry name" value="PsdUridine_synth_TruA_C"/>
</dbReference>
<dbReference type="InterPro" id="IPR020094">
    <property type="entry name" value="TruA/RsuA/RluB/E/F_N"/>
</dbReference>
<dbReference type="NCBIfam" id="TIGR00071">
    <property type="entry name" value="hisT_truA"/>
    <property type="match status" value="1"/>
</dbReference>
<dbReference type="PANTHER" id="PTHR11142">
    <property type="entry name" value="PSEUDOURIDYLATE SYNTHASE"/>
    <property type="match status" value="1"/>
</dbReference>
<dbReference type="PANTHER" id="PTHR11142:SF0">
    <property type="entry name" value="TRNA PSEUDOURIDINE SYNTHASE-LIKE 1"/>
    <property type="match status" value="1"/>
</dbReference>
<dbReference type="Pfam" id="PF01416">
    <property type="entry name" value="PseudoU_synth_1"/>
    <property type="match status" value="2"/>
</dbReference>
<dbReference type="PIRSF" id="PIRSF001430">
    <property type="entry name" value="tRNA_psdUrid_synth"/>
    <property type="match status" value="1"/>
</dbReference>
<dbReference type="SUPFAM" id="SSF55120">
    <property type="entry name" value="Pseudouridine synthase"/>
    <property type="match status" value="1"/>
</dbReference>
<proteinExistence type="inferred from homology"/>
<accession>Q1J9W8</accession>
<reference key="1">
    <citation type="journal article" date="2006" name="Proc. Natl. Acad. Sci. U.S.A.">
        <title>Molecular genetic anatomy of inter- and intraserotype variation in the human bacterial pathogen group A Streptococcus.</title>
        <authorList>
            <person name="Beres S.B."/>
            <person name="Richter E.W."/>
            <person name="Nagiec M.J."/>
            <person name="Sumby P."/>
            <person name="Porcella S.F."/>
            <person name="DeLeo F.R."/>
            <person name="Musser J.M."/>
        </authorList>
    </citation>
    <scope>NUCLEOTIDE SEQUENCE [LARGE SCALE GENOMIC DNA]</scope>
    <source>
        <strain>MGAS2096</strain>
    </source>
</reference>